<keyword id="KW-1015">Disulfide bond</keyword>
<keyword id="KW-0281">Fimbrium</keyword>
<keyword id="KW-0488">Methylation</keyword>
<feature type="propeptide" id="PRO_0000024174" description="Leader sequence" evidence="2">
    <location>
        <begin position="1"/>
        <end position="6"/>
    </location>
</feature>
<feature type="chain" id="PRO_0000024175" description="Fimbrial protein">
    <location>
        <begin position="7"/>
        <end position="150"/>
    </location>
</feature>
<feature type="modified residue" description="N-methylphenylalanine" evidence="2">
    <location>
        <position position="7"/>
    </location>
</feature>
<feature type="disulfide bond" evidence="1">
    <location>
        <begin position="134"/>
        <end position="147"/>
    </location>
</feature>
<gene>
    <name type="primary">pilA</name>
    <name type="synonym">fimA</name>
</gene>
<proteinExistence type="inferred from homology"/>
<dbReference type="EMBL" id="M14850">
    <property type="protein sequence ID" value="AAA25953.1"/>
    <property type="molecule type" value="Genomic_DNA"/>
</dbReference>
<dbReference type="PIR" id="B24603">
    <property type="entry name" value="B24603"/>
</dbReference>
<dbReference type="RefSeq" id="WP_031754077.1">
    <property type="nucleotide sequence ID" value="NZ_CP157460.1"/>
</dbReference>
<dbReference type="SMR" id="P08015"/>
<dbReference type="GO" id="GO:0044096">
    <property type="term" value="C:type IV pilus"/>
    <property type="evidence" value="ECO:0007669"/>
    <property type="project" value="TreeGrafter"/>
</dbReference>
<dbReference type="GO" id="GO:0007155">
    <property type="term" value="P:cell adhesion"/>
    <property type="evidence" value="ECO:0007669"/>
    <property type="project" value="InterPro"/>
</dbReference>
<dbReference type="GO" id="GO:0043107">
    <property type="term" value="P:type IV pilus-dependent motility"/>
    <property type="evidence" value="ECO:0007669"/>
    <property type="project" value="TreeGrafter"/>
</dbReference>
<dbReference type="FunFam" id="3.30.700.10:FF:000003">
    <property type="entry name" value="Type IV pilin"/>
    <property type="match status" value="1"/>
</dbReference>
<dbReference type="Gene3D" id="3.30.700.10">
    <property type="entry name" value="Glycoprotein, Type 4 Pilin"/>
    <property type="match status" value="1"/>
</dbReference>
<dbReference type="InterPro" id="IPR012902">
    <property type="entry name" value="N_methyl_site"/>
</dbReference>
<dbReference type="InterPro" id="IPR001082">
    <property type="entry name" value="Pilin"/>
</dbReference>
<dbReference type="InterPro" id="IPR045584">
    <property type="entry name" value="Pilin-like"/>
</dbReference>
<dbReference type="InterPro" id="IPR050470">
    <property type="entry name" value="T4P/T2SS_Core"/>
</dbReference>
<dbReference type="NCBIfam" id="TIGR02532">
    <property type="entry name" value="IV_pilin_GFxxxE"/>
    <property type="match status" value="1"/>
</dbReference>
<dbReference type="PANTHER" id="PTHR30093">
    <property type="entry name" value="GENERAL SECRETION PATHWAY PROTEIN G"/>
    <property type="match status" value="1"/>
</dbReference>
<dbReference type="PANTHER" id="PTHR30093:SF34">
    <property type="entry name" value="PREPILIN PEPTIDASE-DEPENDENT PROTEIN D"/>
    <property type="match status" value="1"/>
</dbReference>
<dbReference type="Pfam" id="PF07963">
    <property type="entry name" value="N_methyl"/>
    <property type="match status" value="1"/>
</dbReference>
<dbReference type="Pfam" id="PF00114">
    <property type="entry name" value="Pilin"/>
    <property type="match status" value="1"/>
</dbReference>
<dbReference type="SUPFAM" id="SSF54523">
    <property type="entry name" value="Pili subunits"/>
    <property type="match status" value="1"/>
</dbReference>
<dbReference type="PROSITE" id="PS00409">
    <property type="entry name" value="PROKAR_NTER_METHYL"/>
    <property type="match status" value="1"/>
</dbReference>
<protein>
    <recommendedName>
        <fullName>Fimbrial protein</fullName>
    </recommendedName>
    <alternativeName>
        <fullName>Pilin</fullName>
    </alternativeName>
</protein>
<comment type="subunit">
    <text>The pili are polar flexible filaments of about 5.4 nanometers diameter and 2.5 micrometers average length; they consist of only a single polypeptide chain arranged in a helical configuration of five subunits per turn in the assembled pilus.</text>
</comment>
<comment type="subcellular location">
    <subcellularLocation>
        <location>Fimbrium</location>
    </subcellularLocation>
</comment>
<comment type="similarity">
    <text evidence="3">Belongs to the N-Me-Phe pilin family.</text>
</comment>
<evidence type="ECO:0000250" key="1"/>
<evidence type="ECO:0000255" key="2">
    <source>
        <dbReference type="PROSITE-ProRule" id="PRU01070"/>
    </source>
</evidence>
<evidence type="ECO:0000305" key="3"/>
<sequence length="150" mass="15799">MKAQKGFTLIELMIVVAIIGILAAIAIPQYQNYVARSEGASALATINPLKTTVEESLSRGIAGSKILIGTTASTADTTYVGIDEKANKLGTVAVTIKDTGDGTIKFNFATGQSSPKNAGREITLNRTAEGVWTCTSTQEEMFIPKGCNEP</sequence>
<organism>
    <name type="scientific">Pseudomonas aeruginosa</name>
    <dbReference type="NCBI Taxonomy" id="287"/>
    <lineage>
        <taxon>Bacteria</taxon>
        <taxon>Pseudomonadati</taxon>
        <taxon>Pseudomonadota</taxon>
        <taxon>Gammaproteobacteria</taxon>
        <taxon>Pseudomonadales</taxon>
        <taxon>Pseudomonadaceae</taxon>
        <taxon>Pseudomonas</taxon>
    </lineage>
</organism>
<reference key="1">
    <citation type="journal article" date="1986" name="J. Biol. Chem.">
        <title>Nucleotide sequence and transcriptional initiation site of two Pseudomonas aeruginosa pilin genes.</title>
        <authorList>
            <person name="Johnson K."/>
            <person name="Parker M.L."/>
            <person name="Lory S."/>
        </authorList>
    </citation>
    <scope>NUCLEOTIDE SEQUENCE [GENOMIC DNA]</scope>
    <source>
        <strain>ATCC 29260 / PA103</strain>
    </source>
</reference>
<accession>P08015</accession>
<name>FMP3_PSEAI</name>